<dbReference type="EC" id="1.1.1.86" evidence="1"/>
<dbReference type="EMBL" id="CP000029">
    <property type="protein sequence ID" value="AAW55015.1"/>
    <property type="molecule type" value="Genomic_DNA"/>
</dbReference>
<dbReference type="RefSeq" id="WP_001830020.1">
    <property type="nucleotide sequence ID" value="NC_002976.3"/>
</dbReference>
<dbReference type="SMR" id="Q5HMG0"/>
<dbReference type="STRING" id="176279.SERP1668"/>
<dbReference type="GeneID" id="50018244"/>
<dbReference type="KEGG" id="ser:SERP1668"/>
<dbReference type="eggNOG" id="COG0059">
    <property type="taxonomic scope" value="Bacteria"/>
</dbReference>
<dbReference type="HOGENOM" id="CLU_033821_0_1_9"/>
<dbReference type="UniPathway" id="UPA00047">
    <property type="reaction ID" value="UER00056"/>
</dbReference>
<dbReference type="UniPathway" id="UPA00049">
    <property type="reaction ID" value="UER00060"/>
</dbReference>
<dbReference type="Proteomes" id="UP000000531">
    <property type="component" value="Chromosome"/>
</dbReference>
<dbReference type="GO" id="GO:0005829">
    <property type="term" value="C:cytosol"/>
    <property type="evidence" value="ECO:0007669"/>
    <property type="project" value="TreeGrafter"/>
</dbReference>
<dbReference type="GO" id="GO:0004455">
    <property type="term" value="F:ketol-acid reductoisomerase activity"/>
    <property type="evidence" value="ECO:0007669"/>
    <property type="project" value="UniProtKB-UniRule"/>
</dbReference>
<dbReference type="GO" id="GO:0000287">
    <property type="term" value="F:magnesium ion binding"/>
    <property type="evidence" value="ECO:0007669"/>
    <property type="project" value="UniProtKB-UniRule"/>
</dbReference>
<dbReference type="GO" id="GO:0050661">
    <property type="term" value="F:NADP binding"/>
    <property type="evidence" value="ECO:0007669"/>
    <property type="project" value="InterPro"/>
</dbReference>
<dbReference type="GO" id="GO:0009097">
    <property type="term" value="P:isoleucine biosynthetic process"/>
    <property type="evidence" value="ECO:0007669"/>
    <property type="project" value="UniProtKB-UniRule"/>
</dbReference>
<dbReference type="GO" id="GO:0009099">
    <property type="term" value="P:L-valine biosynthetic process"/>
    <property type="evidence" value="ECO:0007669"/>
    <property type="project" value="UniProtKB-UniRule"/>
</dbReference>
<dbReference type="FunFam" id="3.40.50.720:FF:000023">
    <property type="entry name" value="Ketol-acid reductoisomerase (NADP(+))"/>
    <property type="match status" value="1"/>
</dbReference>
<dbReference type="Gene3D" id="6.10.240.10">
    <property type="match status" value="1"/>
</dbReference>
<dbReference type="Gene3D" id="3.40.50.720">
    <property type="entry name" value="NAD(P)-binding Rossmann-like Domain"/>
    <property type="match status" value="1"/>
</dbReference>
<dbReference type="HAMAP" id="MF_00435">
    <property type="entry name" value="IlvC"/>
    <property type="match status" value="1"/>
</dbReference>
<dbReference type="InterPro" id="IPR008927">
    <property type="entry name" value="6-PGluconate_DH-like_C_sf"/>
</dbReference>
<dbReference type="InterPro" id="IPR013023">
    <property type="entry name" value="KARI"/>
</dbReference>
<dbReference type="InterPro" id="IPR000506">
    <property type="entry name" value="KARI_C"/>
</dbReference>
<dbReference type="InterPro" id="IPR013116">
    <property type="entry name" value="KARI_N"/>
</dbReference>
<dbReference type="InterPro" id="IPR014359">
    <property type="entry name" value="KARI_prok"/>
</dbReference>
<dbReference type="InterPro" id="IPR036291">
    <property type="entry name" value="NAD(P)-bd_dom_sf"/>
</dbReference>
<dbReference type="NCBIfam" id="TIGR00465">
    <property type="entry name" value="ilvC"/>
    <property type="match status" value="1"/>
</dbReference>
<dbReference type="NCBIfam" id="NF004017">
    <property type="entry name" value="PRK05479.1"/>
    <property type="match status" value="1"/>
</dbReference>
<dbReference type="NCBIfam" id="NF009940">
    <property type="entry name" value="PRK13403.1"/>
    <property type="match status" value="1"/>
</dbReference>
<dbReference type="PANTHER" id="PTHR21371">
    <property type="entry name" value="KETOL-ACID REDUCTOISOMERASE, MITOCHONDRIAL"/>
    <property type="match status" value="1"/>
</dbReference>
<dbReference type="PANTHER" id="PTHR21371:SF1">
    <property type="entry name" value="KETOL-ACID REDUCTOISOMERASE, MITOCHONDRIAL"/>
    <property type="match status" value="1"/>
</dbReference>
<dbReference type="Pfam" id="PF01450">
    <property type="entry name" value="KARI_C"/>
    <property type="match status" value="1"/>
</dbReference>
<dbReference type="Pfam" id="PF07991">
    <property type="entry name" value="KARI_N"/>
    <property type="match status" value="1"/>
</dbReference>
<dbReference type="PIRSF" id="PIRSF000116">
    <property type="entry name" value="IlvC_gammaproteo"/>
    <property type="match status" value="1"/>
</dbReference>
<dbReference type="SUPFAM" id="SSF48179">
    <property type="entry name" value="6-phosphogluconate dehydrogenase C-terminal domain-like"/>
    <property type="match status" value="1"/>
</dbReference>
<dbReference type="SUPFAM" id="SSF51735">
    <property type="entry name" value="NAD(P)-binding Rossmann-fold domains"/>
    <property type="match status" value="1"/>
</dbReference>
<dbReference type="PROSITE" id="PS51851">
    <property type="entry name" value="KARI_C"/>
    <property type="match status" value="1"/>
</dbReference>
<dbReference type="PROSITE" id="PS51850">
    <property type="entry name" value="KARI_N"/>
    <property type="match status" value="1"/>
</dbReference>
<protein>
    <recommendedName>
        <fullName evidence="1">Ketol-acid reductoisomerase (NADP(+))</fullName>
        <shortName evidence="1">KARI</shortName>
        <ecNumber evidence="1">1.1.1.86</ecNumber>
    </recommendedName>
    <alternativeName>
        <fullName evidence="1">Acetohydroxy-acid isomeroreductase</fullName>
        <shortName evidence="1">AHIR</shortName>
    </alternativeName>
    <alternativeName>
        <fullName evidence="1">Alpha-keto-beta-hydroxylacyl reductoisomerase</fullName>
    </alternativeName>
    <alternativeName>
        <fullName evidence="1">Ketol-acid reductoisomerase type 1</fullName>
    </alternativeName>
    <alternativeName>
        <fullName evidence="1">Ketol-acid reductoisomerase type I</fullName>
    </alternativeName>
</protein>
<feature type="chain" id="PRO_0000151362" description="Ketol-acid reductoisomerase (NADP(+))">
    <location>
        <begin position="1"/>
        <end position="334"/>
    </location>
</feature>
<feature type="domain" description="KARI N-terminal Rossmann" evidence="2">
    <location>
        <begin position="2"/>
        <end position="181"/>
    </location>
</feature>
<feature type="domain" description="KARI C-terminal knotted" evidence="3">
    <location>
        <begin position="182"/>
        <end position="327"/>
    </location>
</feature>
<feature type="active site" evidence="1">
    <location>
        <position position="107"/>
    </location>
</feature>
<feature type="binding site" evidence="1">
    <location>
        <begin position="25"/>
        <end position="28"/>
    </location>
    <ligand>
        <name>NADP(+)</name>
        <dbReference type="ChEBI" id="CHEBI:58349"/>
    </ligand>
</feature>
<feature type="binding site" evidence="1">
    <location>
        <position position="48"/>
    </location>
    <ligand>
        <name>NADP(+)</name>
        <dbReference type="ChEBI" id="CHEBI:58349"/>
    </ligand>
</feature>
<feature type="binding site" evidence="1">
    <location>
        <position position="52"/>
    </location>
    <ligand>
        <name>NADP(+)</name>
        <dbReference type="ChEBI" id="CHEBI:58349"/>
    </ligand>
</feature>
<feature type="binding site" evidence="1">
    <location>
        <begin position="82"/>
        <end position="85"/>
    </location>
    <ligand>
        <name>NADP(+)</name>
        <dbReference type="ChEBI" id="CHEBI:58349"/>
    </ligand>
</feature>
<feature type="binding site" evidence="1">
    <location>
        <position position="133"/>
    </location>
    <ligand>
        <name>NADP(+)</name>
        <dbReference type="ChEBI" id="CHEBI:58349"/>
    </ligand>
</feature>
<feature type="binding site" evidence="1">
    <location>
        <position position="190"/>
    </location>
    <ligand>
        <name>Mg(2+)</name>
        <dbReference type="ChEBI" id="CHEBI:18420"/>
        <label>1</label>
    </ligand>
</feature>
<feature type="binding site" evidence="1">
    <location>
        <position position="190"/>
    </location>
    <ligand>
        <name>Mg(2+)</name>
        <dbReference type="ChEBI" id="CHEBI:18420"/>
        <label>2</label>
    </ligand>
</feature>
<feature type="binding site" evidence="1">
    <location>
        <position position="194"/>
    </location>
    <ligand>
        <name>Mg(2+)</name>
        <dbReference type="ChEBI" id="CHEBI:18420"/>
        <label>1</label>
    </ligand>
</feature>
<feature type="binding site" evidence="1">
    <location>
        <position position="226"/>
    </location>
    <ligand>
        <name>Mg(2+)</name>
        <dbReference type="ChEBI" id="CHEBI:18420"/>
        <label>2</label>
    </ligand>
</feature>
<feature type="binding site" evidence="1">
    <location>
        <position position="230"/>
    </location>
    <ligand>
        <name>Mg(2+)</name>
        <dbReference type="ChEBI" id="CHEBI:18420"/>
        <label>2</label>
    </ligand>
</feature>
<feature type="binding site" evidence="1">
    <location>
        <position position="251"/>
    </location>
    <ligand>
        <name>substrate</name>
    </ligand>
</feature>
<evidence type="ECO:0000255" key="1">
    <source>
        <dbReference type="HAMAP-Rule" id="MF_00435"/>
    </source>
</evidence>
<evidence type="ECO:0000255" key="2">
    <source>
        <dbReference type="PROSITE-ProRule" id="PRU01197"/>
    </source>
</evidence>
<evidence type="ECO:0000255" key="3">
    <source>
        <dbReference type="PROSITE-ProRule" id="PRU01198"/>
    </source>
</evidence>
<name>ILVC_STAEQ</name>
<reference key="1">
    <citation type="journal article" date="2005" name="J. Bacteriol.">
        <title>Insights on evolution of virulence and resistance from the complete genome analysis of an early methicillin-resistant Staphylococcus aureus strain and a biofilm-producing methicillin-resistant Staphylococcus epidermidis strain.</title>
        <authorList>
            <person name="Gill S.R."/>
            <person name="Fouts D.E."/>
            <person name="Archer G.L."/>
            <person name="Mongodin E.F."/>
            <person name="DeBoy R.T."/>
            <person name="Ravel J."/>
            <person name="Paulsen I.T."/>
            <person name="Kolonay J.F."/>
            <person name="Brinkac L.M."/>
            <person name="Beanan M.J."/>
            <person name="Dodson R.J."/>
            <person name="Daugherty S.C."/>
            <person name="Madupu R."/>
            <person name="Angiuoli S.V."/>
            <person name="Durkin A.S."/>
            <person name="Haft D.H."/>
            <person name="Vamathevan J.J."/>
            <person name="Khouri H."/>
            <person name="Utterback T.R."/>
            <person name="Lee C."/>
            <person name="Dimitrov G."/>
            <person name="Jiang L."/>
            <person name="Qin H."/>
            <person name="Weidman J."/>
            <person name="Tran K."/>
            <person name="Kang K.H."/>
            <person name="Hance I.R."/>
            <person name="Nelson K.E."/>
            <person name="Fraser C.M."/>
        </authorList>
    </citation>
    <scope>NUCLEOTIDE SEQUENCE [LARGE SCALE GENOMIC DNA]</scope>
    <source>
        <strain>ATCC 35984 / DSM 28319 / BCRC 17069 / CCUG 31568 / BM 3577 / RP62A</strain>
    </source>
</reference>
<proteinExistence type="inferred from homology"/>
<accession>Q5HMG0</accession>
<keyword id="KW-0028">Amino-acid biosynthesis</keyword>
<keyword id="KW-0100">Branched-chain amino acid biosynthesis</keyword>
<keyword id="KW-0460">Magnesium</keyword>
<keyword id="KW-0479">Metal-binding</keyword>
<keyword id="KW-0521">NADP</keyword>
<keyword id="KW-0560">Oxidoreductase</keyword>
<keyword id="KW-1185">Reference proteome</keyword>
<gene>
    <name evidence="1" type="primary">ilvC</name>
    <name type="ordered locus">SERP1668</name>
</gene>
<sequence>MTKVYYDETVTQDALQGKKIAVIGYGSQGHAHAQNLKDNGYDVVIGLRPGRSFNKAKEDGFDVYTVSEATQQADVVMVLLPDEIQGEVYNKEIKPYLEKGNALAFAHGFNIHFSVIEPPSDVDVFLVAPKGPGHLVRRTFVEGSAVPALFGVQQDATGQARNIALSYAKGIGATRAGVIETTFKEETETDLFGEQAVLCGGVSKLIQSGFETLVEAGYQPELAYFEVLHEMKLIVDLMYEGGMENVRYSISNTAEFGDYVSGPRVITPNVKENMKKVLEDIQNGNFSRRFVEDNKNGFKEFYQLREDQHGHQIEQVGRELREMMPFIKSKSIEK</sequence>
<organism>
    <name type="scientific">Staphylococcus epidermidis (strain ATCC 35984 / DSM 28319 / BCRC 17069 / CCUG 31568 / BM 3577 / RP62A)</name>
    <dbReference type="NCBI Taxonomy" id="176279"/>
    <lineage>
        <taxon>Bacteria</taxon>
        <taxon>Bacillati</taxon>
        <taxon>Bacillota</taxon>
        <taxon>Bacilli</taxon>
        <taxon>Bacillales</taxon>
        <taxon>Staphylococcaceae</taxon>
        <taxon>Staphylococcus</taxon>
    </lineage>
</organism>
<comment type="function">
    <text evidence="1">Involved in the biosynthesis of branched-chain amino acids (BCAA). Catalyzes an alkyl-migration followed by a ketol-acid reduction of (S)-2-acetolactate (S2AL) to yield (R)-2,3-dihydroxy-isovalerate. In the isomerase reaction, S2AL is rearranged via a Mg-dependent methyl migration to produce 3-hydroxy-3-methyl-2-ketobutyrate (HMKB). In the reductase reaction, this 2-ketoacid undergoes a metal-dependent reduction by NADPH to yield (R)-2,3-dihydroxy-isovalerate.</text>
</comment>
<comment type="catalytic activity">
    <reaction evidence="1">
        <text>(2R)-2,3-dihydroxy-3-methylbutanoate + NADP(+) = (2S)-2-acetolactate + NADPH + H(+)</text>
        <dbReference type="Rhea" id="RHEA:22068"/>
        <dbReference type="ChEBI" id="CHEBI:15378"/>
        <dbReference type="ChEBI" id="CHEBI:49072"/>
        <dbReference type="ChEBI" id="CHEBI:57783"/>
        <dbReference type="ChEBI" id="CHEBI:58349"/>
        <dbReference type="ChEBI" id="CHEBI:58476"/>
        <dbReference type="EC" id="1.1.1.86"/>
    </reaction>
</comment>
<comment type="catalytic activity">
    <reaction evidence="1">
        <text>(2R,3R)-2,3-dihydroxy-3-methylpentanoate + NADP(+) = (S)-2-ethyl-2-hydroxy-3-oxobutanoate + NADPH + H(+)</text>
        <dbReference type="Rhea" id="RHEA:13493"/>
        <dbReference type="ChEBI" id="CHEBI:15378"/>
        <dbReference type="ChEBI" id="CHEBI:49256"/>
        <dbReference type="ChEBI" id="CHEBI:49258"/>
        <dbReference type="ChEBI" id="CHEBI:57783"/>
        <dbReference type="ChEBI" id="CHEBI:58349"/>
        <dbReference type="EC" id="1.1.1.86"/>
    </reaction>
</comment>
<comment type="cofactor">
    <cofactor evidence="1">
        <name>Mg(2+)</name>
        <dbReference type="ChEBI" id="CHEBI:18420"/>
    </cofactor>
    <text evidence="1">Binds 2 magnesium ions per subunit.</text>
</comment>
<comment type="pathway">
    <text evidence="1">Amino-acid biosynthesis; L-isoleucine biosynthesis; L-isoleucine from 2-oxobutanoate: step 2/4.</text>
</comment>
<comment type="pathway">
    <text evidence="1">Amino-acid biosynthesis; L-valine biosynthesis; L-valine from pyruvate: step 2/4.</text>
</comment>
<comment type="similarity">
    <text evidence="1">Belongs to the ketol-acid reductoisomerase family.</text>
</comment>